<dbReference type="EC" id="6.3.4.3" evidence="1"/>
<dbReference type="EMBL" id="U39612">
    <property type="protein sequence ID" value="AAB49329.1"/>
    <property type="molecule type" value="Genomic_DNA"/>
</dbReference>
<dbReference type="EMBL" id="AE014133">
    <property type="protein sequence ID" value="AAN58771.1"/>
    <property type="molecule type" value="Genomic_DNA"/>
</dbReference>
<dbReference type="EMBL" id="U48882">
    <property type="protein sequence ID" value="AAC44499.1"/>
    <property type="molecule type" value="Genomic_DNA"/>
</dbReference>
<dbReference type="RefSeq" id="NP_721465.1">
    <property type="nucleotide sequence ID" value="NC_004350.2"/>
</dbReference>
<dbReference type="RefSeq" id="WP_002262267.1">
    <property type="nucleotide sequence ID" value="NC_004350.2"/>
</dbReference>
<dbReference type="SMR" id="Q59925"/>
<dbReference type="STRING" id="210007.SMU_1073"/>
<dbReference type="KEGG" id="smu:SMU_1073"/>
<dbReference type="PATRIC" id="fig|210007.7.peg.960"/>
<dbReference type="eggNOG" id="COG2759">
    <property type="taxonomic scope" value="Bacteria"/>
</dbReference>
<dbReference type="HOGENOM" id="CLU_003601_3_3_9"/>
<dbReference type="OrthoDB" id="9761733at2"/>
<dbReference type="PhylomeDB" id="Q59925"/>
<dbReference type="UniPathway" id="UPA00193"/>
<dbReference type="Proteomes" id="UP000002512">
    <property type="component" value="Chromosome"/>
</dbReference>
<dbReference type="GO" id="GO:0005524">
    <property type="term" value="F:ATP binding"/>
    <property type="evidence" value="ECO:0007669"/>
    <property type="project" value="UniProtKB-UniRule"/>
</dbReference>
<dbReference type="GO" id="GO:0004329">
    <property type="term" value="F:formate-tetrahydrofolate ligase activity"/>
    <property type="evidence" value="ECO:0007669"/>
    <property type="project" value="UniProtKB-UniRule"/>
</dbReference>
<dbReference type="GO" id="GO:0035999">
    <property type="term" value="P:tetrahydrofolate interconversion"/>
    <property type="evidence" value="ECO:0007669"/>
    <property type="project" value="UniProtKB-UniRule"/>
</dbReference>
<dbReference type="CDD" id="cd00477">
    <property type="entry name" value="FTHFS"/>
    <property type="match status" value="1"/>
</dbReference>
<dbReference type="FunFam" id="3.30.1510.10:FF:000001">
    <property type="entry name" value="Formate--tetrahydrofolate ligase"/>
    <property type="match status" value="1"/>
</dbReference>
<dbReference type="FunFam" id="3.10.410.10:FF:000001">
    <property type="entry name" value="Putative formate--tetrahydrofolate ligase"/>
    <property type="match status" value="1"/>
</dbReference>
<dbReference type="Gene3D" id="3.30.1510.10">
    <property type="entry name" value="Domain 2, N(10)-formyltetrahydrofolate synthetase"/>
    <property type="match status" value="1"/>
</dbReference>
<dbReference type="Gene3D" id="3.10.410.10">
    <property type="entry name" value="Formyltetrahydrofolate synthetase, domain 3"/>
    <property type="match status" value="1"/>
</dbReference>
<dbReference type="Gene3D" id="3.40.50.300">
    <property type="entry name" value="P-loop containing nucleotide triphosphate hydrolases"/>
    <property type="match status" value="1"/>
</dbReference>
<dbReference type="HAMAP" id="MF_01543">
    <property type="entry name" value="FTHFS"/>
    <property type="match status" value="1"/>
</dbReference>
<dbReference type="InterPro" id="IPR000559">
    <property type="entry name" value="Formate_THF_ligase"/>
</dbReference>
<dbReference type="InterPro" id="IPR020628">
    <property type="entry name" value="Formate_THF_ligase_CS"/>
</dbReference>
<dbReference type="InterPro" id="IPR027417">
    <property type="entry name" value="P-loop_NTPase"/>
</dbReference>
<dbReference type="NCBIfam" id="NF010030">
    <property type="entry name" value="PRK13505.1"/>
    <property type="match status" value="1"/>
</dbReference>
<dbReference type="Pfam" id="PF01268">
    <property type="entry name" value="FTHFS"/>
    <property type="match status" value="1"/>
</dbReference>
<dbReference type="SUPFAM" id="SSF52540">
    <property type="entry name" value="P-loop containing nucleoside triphosphate hydrolases"/>
    <property type="match status" value="1"/>
</dbReference>
<dbReference type="PROSITE" id="PS00721">
    <property type="entry name" value="FTHFS_1"/>
    <property type="match status" value="1"/>
</dbReference>
<dbReference type="PROSITE" id="PS00722">
    <property type="entry name" value="FTHFS_2"/>
    <property type="match status" value="1"/>
</dbReference>
<evidence type="ECO:0000255" key="1">
    <source>
        <dbReference type="HAMAP-Rule" id="MF_01543"/>
    </source>
</evidence>
<evidence type="ECO:0000305" key="2"/>
<sequence length="556" mass="59734">MKTDIEIAQSVDLRPITNVVKKLGFDFDDLELYGKYKAKLTFDKIKAVEENAPGKLVLVTAINPTPAGEGKSTITIGLADALNKIGKKTMIAIREPSLGPVMGIKGGAAGGGYAQVLPMEDINLHFTGDMHAITTANNALSALIDNHLHQGNELGIDQRRIIWKRVVDLNDRALRHVTVGLGSPINGIPREDGFDITVASEIMAILCLATNVEDLKERLANIVIGYRFDRSPVYVRDLEVQGALALILKEAIKPNLVQTIYGTPAFVHGGPFANIAHGCNSVLATSTALRLADYTITEAGFGADLGAEKFLDIKAPNLPTSPDAVVIVATIRALKMNGGVAKDALNQENVEAVKAGFANLARHVENMRKYGVPVVVAINEFITDTNDEIAVLRNLCAAIDVPVELASVWANGADGGVDLANTLINTIENNPSHYKRLYDNNLSVEEKVTEIAKEIYRADKVIFEKKAKTQIAQIVKNGWDNLPICMAKTQYSFSDDPKLLGAPTGFDITIRELVPKLGAGFIVALTGDVMTMPGLPKKPAALNMDVAADGTALGLF</sequence>
<keyword id="KW-0067">ATP-binding</keyword>
<keyword id="KW-0436">Ligase</keyword>
<keyword id="KW-0547">Nucleotide-binding</keyword>
<keyword id="KW-0554">One-carbon metabolism</keyword>
<keyword id="KW-1185">Reference proteome</keyword>
<feature type="chain" id="PRO_0000199386" description="Formate--tetrahydrofolate ligase">
    <location>
        <begin position="1"/>
        <end position="556"/>
    </location>
</feature>
<feature type="binding site" evidence="1">
    <location>
        <begin position="65"/>
        <end position="72"/>
    </location>
    <ligand>
        <name>ATP</name>
        <dbReference type="ChEBI" id="CHEBI:30616"/>
    </ligand>
</feature>
<feature type="sequence conflict" description="In Ref. 1; AAB49329." evidence="2" ref="1">
    <original>F</original>
    <variation>I</variation>
    <location>
        <position position="25"/>
    </location>
</feature>
<proteinExistence type="inferred from homology"/>
<gene>
    <name evidence="1" type="primary">fhs</name>
    <name type="synonym">fthS</name>
    <name type="ordered locus">SMU_1073</name>
</gene>
<organism>
    <name type="scientific">Streptococcus mutans serotype c (strain ATCC 700610 / UA159)</name>
    <dbReference type="NCBI Taxonomy" id="210007"/>
    <lineage>
        <taxon>Bacteria</taxon>
        <taxon>Bacillati</taxon>
        <taxon>Bacillota</taxon>
        <taxon>Bacilli</taxon>
        <taxon>Lactobacillales</taxon>
        <taxon>Streptococcaceae</taxon>
        <taxon>Streptococcus</taxon>
    </lineage>
</organism>
<name>FTHS_STRMU</name>
<accession>Q59925</accession>
<accession>Q59926</accession>
<reference key="1">
    <citation type="journal article" date="1997" name="J. Bacteriol.">
        <title>Genetic and physiologic analysis of a formyl-tetrahydrofolate synthetase mutant of Streptococcus mutans.</title>
        <authorList>
            <person name="Crowley P.J."/>
            <person name="Gutierrez J.A."/>
            <person name="Hillman J.D."/>
            <person name="Bleiweis A.S."/>
        </authorList>
    </citation>
    <scope>NUCLEOTIDE SEQUENCE [GENOMIC DNA]</scope>
    <source>
        <strain>JH1005</strain>
    </source>
</reference>
<reference key="2">
    <citation type="journal article" date="2002" name="Proc. Natl. Acad. Sci. U.S.A.">
        <title>Genome sequence of Streptococcus mutans UA159, a cariogenic dental pathogen.</title>
        <authorList>
            <person name="Ajdic D.J."/>
            <person name="McShan W.M."/>
            <person name="McLaughlin R.E."/>
            <person name="Savic G."/>
            <person name="Chang J."/>
            <person name="Carson M.B."/>
            <person name="Primeaux C."/>
            <person name="Tian R."/>
            <person name="Kenton S."/>
            <person name="Jia H.G."/>
            <person name="Lin S.P."/>
            <person name="Qian Y."/>
            <person name="Li S."/>
            <person name="Zhu H."/>
            <person name="Najar F.Z."/>
            <person name="Lai H."/>
            <person name="White J."/>
            <person name="Roe B.A."/>
            <person name="Ferretti J.J."/>
        </authorList>
    </citation>
    <scope>NUCLEOTIDE SEQUENCE [LARGE SCALE GENOMIC DNA]</scope>
    <source>
        <strain>ATCC 700610 / UA159</strain>
    </source>
</reference>
<reference key="3">
    <citation type="journal article" date="1996" name="J. Bacteriol.">
        <title>Insertional mutagenesis and recovery of interrupted genes of Streptococcus mutans by using transposon Tn917: preliminary characterization of mutants displaying acid sensitivity and nutritional requirements.</title>
        <authorList>
            <person name="Gutierrez J.A."/>
            <person name="Crowley P.J."/>
            <person name="Brown D.P."/>
            <person name="Hillman J.D."/>
            <person name="Youngman P."/>
            <person name="Bleiweis A.S."/>
        </authorList>
    </citation>
    <scope>NUCLEOTIDE SEQUENCE [GENOMIC DNA] OF 139-296</scope>
    <source>
        <strain>NG8</strain>
    </source>
</reference>
<protein>
    <recommendedName>
        <fullName evidence="1">Formate--tetrahydrofolate ligase</fullName>
        <ecNumber evidence="1">6.3.4.3</ecNumber>
    </recommendedName>
    <alternativeName>
        <fullName evidence="1">Formyltetrahydrofolate synthetase</fullName>
        <shortName evidence="1">FHS</shortName>
        <shortName evidence="1">FTHFS</shortName>
    </alternativeName>
</protein>
<comment type="catalytic activity">
    <reaction evidence="1">
        <text>(6S)-5,6,7,8-tetrahydrofolate + formate + ATP = (6R)-10-formyltetrahydrofolate + ADP + phosphate</text>
        <dbReference type="Rhea" id="RHEA:20221"/>
        <dbReference type="ChEBI" id="CHEBI:15740"/>
        <dbReference type="ChEBI" id="CHEBI:30616"/>
        <dbReference type="ChEBI" id="CHEBI:43474"/>
        <dbReference type="ChEBI" id="CHEBI:57453"/>
        <dbReference type="ChEBI" id="CHEBI:195366"/>
        <dbReference type="ChEBI" id="CHEBI:456216"/>
        <dbReference type="EC" id="6.3.4.3"/>
    </reaction>
</comment>
<comment type="pathway">
    <text evidence="1">One-carbon metabolism; tetrahydrofolate interconversion.</text>
</comment>
<comment type="similarity">
    <text evidence="1">Belongs to the formate--tetrahydrofolate ligase family.</text>
</comment>